<gene>
    <name evidence="3" type="primary">N7BML</name>
    <name type="ordered locus">YALI0D27082g</name>
</gene>
<accession>Q6C7L6</accession>
<keyword id="KW-0002">3D-structure</keyword>
<keyword id="KW-0143">Chaperone</keyword>
<keyword id="KW-0496">Mitochondrion</keyword>
<keyword id="KW-1185">Reference proteome</keyword>
<comment type="function">
    <text evidence="2">Acts as an assembly factor of mitochondrial complex I.</text>
</comment>
<comment type="subcellular location">
    <subcellularLocation>
        <location evidence="2">Mitochondrion</location>
    </subcellularLocation>
</comment>
<comment type="similarity">
    <text evidence="4">Belongs to the complex I NDUFA12 subunit family.</text>
</comment>
<sequence length="237" mass="27603">MIPTPVLRFNPIADKVPKWKRIYHKWRGIQNMPFKSKYFVGYDLDGNSYWEFKNVNNPGRYRRIVEPAKPDLSLVDHKIPPQWVQWLRFTRPHHPTLEELIADKQRQELLQAKIAAYEAKWKEIPLKTAENADESRDMSLEDQLKPTFTEAELAEMAQVFEKVPQQAAPAPPRVPNMAAIEVEDIIKHYPENGPDTVLADGGRQRDHDLKMDYVEKERDDSGKPAEWTPKAAVRRRG</sequence>
<dbReference type="EMBL" id="CR382130">
    <property type="protein sequence ID" value="CAG81552.1"/>
    <property type="molecule type" value="Genomic_DNA"/>
</dbReference>
<dbReference type="RefSeq" id="XP_503346.1">
    <property type="nucleotide sequence ID" value="XM_503346.1"/>
</dbReference>
<dbReference type="PDB" id="6RFQ">
    <property type="method" value="EM"/>
    <property type="resolution" value="3.30 A"/>
    <property type="chains" value="k=1-237"/>
</dbReference>
<dbReference type="PDBsum" id="6RFQ"/>
<dbReference type="SMR" id="Q6C7L6"/>
<dbReference type="STRING" id="284591.Q6C7L6"/>
<dbReference type="EnsemblFungi" id="CAG81552">
    <property type="protein sequence ID" value="CAG81552"/>
    <property type="gene ID" value="YALI0_D27082g"/>
</dbReference>
<dbReference type="KEGG" id="yli:2911242"/>
<dbReference type="VEuPathDB" id="FungiDB:YALI0_D27082g"/>
<dbReference type="HOGENOM" id="CLU_067876_0_0_1"/>
<dbReference type="InParanoid" id="Q6C7L6"/>
<dbReference type="OrthoDB" id="9491at4891"/>
<dbReference type="Proteomes" id="UP000001300">
    <property type="component" value="Chromosome D"/>
</dbReference>
<dbReference type="GO" id="GO:0005739">
    <property type="term" value="C:mitochondrion"/>
    <property type="evidence" value="ECO:0000318"/>
    <property type="project" value="GO_Central"/>
</dbReference>
<dbReference type="GO" id="GO:0045271">
    <property type="term" value="C:respiratory chain complex I"/>
    <property type="evidence" value="ECO:0007669"/>
    <property type="project" value="InterPro"/>
</dbReference>
<dbReference type="GO" id="GO:0032981">
    <property type="term" value="P:mitochondrial respiratory chain complex I assembly"/>
    <property type="evidence" value="ECO:0000318"/>
    <property type="project" value="GO_Central"/>
</dbReference>
<dbReference type="InterPro" id="IPR052618">
    <property type="entry name" value="ComplexI_NDUFA12"/>
</dbReference>
<dbReference type="InterPro" id="IPR007763">
    <property type="entry name" value="NDUFA12"/>
</dbReference>
<dbReference type="PANTHER" id="PTHR32470">
    <property type="entry name" value="ADH DEHYDROGENASE [UBIQUINONE] 1 ALPHA SUBCOMPLEX ASSEMBLY FACTOR 2"/>
    <property type="match status" value="1"/>
</dbReference>
<dbReference type="PANTHER" id="PTHR32470:SF2">
    <property type="entry name" value="NADH DEHYDROGENASE [UBIQUINONE] 1 ALPHA SUBCOMPLEX ASSEMBLY FACTOR 2"/>
    <property type="match status" value="1"/>
</dbReference>
<dbReference type="Pfam" id="PF05071">
    <property type="entry name" value="NDUFA12"/>
    <property type="match status" value="1"/>
</dbReference>
<proteinExistence type="evidence at protein level"/>
<organism>
    <name type="scientific">Yarrowia lipolytica (strain CLIB 122 / E 150)</name>
    <name type="common">Yeast</name>
    <name type="synonym">Candida lipolytica</name>
    <dbReference type="NCBI Taxonomy" id="284591"/>
    <lineage>
        <taxon>Eukaryota</taxon>
        <taxon>Fungi</taxon>
        <taxon>Dikarya</taxon>
        <taxon>Ascomycota</taxon>
        <taxon>Saccharomycotina</taxon>
        <taxon>Dipodascomycetes</taxon>
        <taxon>Dipodascales</taxon>
        <taxon>Dipodascales incertae sedis</taxon>
        <taxon>Yarrowia</taxon>
    </lineage>
</organism>
<evidence type="ECO:0000256" key="1">
    <source>
        <dbReference type="SAM" id="MobiDB-lite"/>
    </source>
</evidence>
<evidence type="ECO:0000269" key="2">
    <source>
    </source>
</evidence>
<evidence type="ECO:0000303" key="3">
    <source>
    </source>
</evidence>
<evidence type="ECO:0000305" key="4"/>
<evidence type="ECO:0007829" key="5">
    <source>
        <dbReference type="PDB" id="6RFQ"/>
    </source>
</evidence>
<protein>
    <recommendedName>
        <fullName evidence="3">NADH-ubiquinone oxidoreductase assembly factor N7BML</fullName>
    </recommendedName>
    <alternativeName>
        <fullName evidence="3">N7BM-like protein</fullName>
    </alternativeName>
    <alternativeName>
        <fullName>NADH dehydrogenase [ubiquinone] 1 alpha subcomplex assembly factor 2 homolog</fullName>
        <shortName evidence="3">NDUFAF2 homolog</shortName>
    </alternativeName>
</protein>
<reference key="1">
    <citation type="journal article" date="2004" name="Nature">
        <title>Genome evolution in yeasts.</title>
        <authorList>
            <person name="Dujon B."/>
            <person name="Sherman D."/>
            <person name="Fischer G."/>
            <person name="Durrens P."/>
            <person name="Casaregola S."/>
            <person name="Lafontaine I."/>
            <person name="de Montigny J."/>
            <person name="Marck C."/>
            <person name="Neuveglise C."/>
            <person name="Talla E."/>
            <person name="Goffard N."/>
            <person name="Frangeul L."/>
            <person name="Aigle M."/>
            <person name="Anthouard V."/>
            <person name="Babour A."/>
            <person name="Barbe V."/>
            <person name="Barnay S."/>
            <person name="Blanchin S."/>
            <person name="Beckerich J.-M."/>
            <person name="Beyne E."/>
            <person name="Bleykasten C."/>
            <person name="Boisrame A."/>
            <person name="Boyer J."/>
            <person name="Cattolico L."/>
            <person name="Confanioleri F."/>
            <person name="de Daruvar A."/>
            <person name="Despons L."/>
            <person name="Fabre E."/>
            <person name="Fairhead C."/>
            <person name="Ferry-Dumazet H."/>
            <person name="Groppi A."/>
            <person name="Hantraye F."/>
            <person name="Hennequin C."/>
            <person name="Jauniaux N."/>
            <person name="Joyet P."/>
            <person name="Kachouri R."/>
            <person name="Kerrest A."/>
            <person name="Koszul R."/>
            <person name="Lemaire M."/>
            <person name="Lesur I."/>
            <person name="Ma L."/>
            <person name="Muller H."/>
            <person name="Nicaud J.-M."/>
            <person name="Nikolski M."/>
            <person name="Oztas S."/>
            <person name="Ozier-Kalogeropoulos O."/>
            <person name="Pellenz S."/>
            <person name="Potier S."/>
            <person name="Richard G.-F."/>
            <person name="Straub M.-L."/>
            <person name="Suleau A."/>
            <person name="Swennen D."/>
            <person name="Tekaia F."/>
            <person name="Wesolowski-Louvel M."/>
            <person name="Westhof E."/>
            <person name="Wirth B."/>
            <person name="Zeniou-Meyer M."/>
            <person name="Zivanovic Y."/>
            <person name="Bolotin-Fukuhara M."/>
            <person name="Thierry A."/>
            <person name="Bouchier C."/>
            <person name="Caudron B."/>
            <person name="Scarpelli C."/>
            <person name="Gaillardin C."/>
            <person name="Weissenbach J."/>
            <person name="Wincker P."/>
            <person name="Souciet J.-L."/>
        </authorList>
    </citation>
    <scope>NUCLEOTIDE SEQUENCE [LARGE SCALE GENOMIC DNA]</scope>
    <source>
        <strain>CLIB 122 / E 150</strain>
    </source>
</reference>
<reference key="2">
    <citation type="journal article" date="2015" name="Proc. Natl. Acad. Sci. U.S.A.">
        <title>Accessory NUMM (NDUFS6) subunit harbors a Zn-binding site and is essential for biogenesis of mitochondrial complex I.</title>
        <authorList>
            <person name="Kmita K."/>
            <person name="Wirth C."/>
            <person name="Warnau J."/>
            <person name="Guerrero-Castillo S."/>
            <person name="Hunte C."/>
            <person name="Hummer G."/>
            <person name="Kaila V.R."/>
            <person name="Zwicker K."/>
            <person name="Brandt U."/>
            <person name="Zickermann V."/>
        </authorList>
    </citation>
    <scope>FUNCTION</scope>
    <scope>SUBCELLULAR LOCATION</scope>
    <scope>IDENTIFICATION BY MASS SPECTROMETRY</scope>
</reference>
<name>N7BML_YARLI</name>
<feature type="chain" id="PRO_0000433340" description="NADH-ubiquinone oxidoreductase assembly factor N7BML">
    <location>
        <begin position="1"/>
        <end position="237"/>
    </location>
</feature>
<feature type="region of interest" description="Disordered" evidence="1">
    <location>
        <begin position="214"/>
        <end position="237"/>
    </location>
</feature>
<feature type="compositionally biased region" description="Basic and acidic residues" evidence="1">
    <location>
        <begin position="214"/>
        <end position="223"/>
    </location>
</feature>
<feature type="strand" evidence="5">
    <location>
        <begin position="44"/>
        <end position="46"/>
    </location>
</feature>
<feature type="strand" evidence="5">
    <location>
        <begin position="48"/>
        <end position="53"/>
    </location>
</feature>
<feature type="strand" evidence="5">
    <location>
        <begin position="63"/>
        <end position="66"/>
    </location>
</feature>
<feature type="helix" evidence="5">
    <location>
        <begin position="81"/>
        <end position="87"/>
    </location>
</feature>
<feature type="helix" evidence="5">
    <location>
        <begin position="97"/>
        <end position="120"/>
    </location>
</feature>